<organism>
    <name type="scientific">Mus musculus</name>
    <name type="common">Mouse</name>
    <dbReference type="NCBI Taxonomy" id="10090"/>
    <lineage>
        <taxon>Eukaryota</taxon>
        <taxon>Metazoa</taxon>
        <taxon>Chordata</taxon>
        <taxon>Craniata</taxon>
        <taxon>Vertebrata</taxon>
        <taxon>Euteleostomi</taxon>
        <taxon>Mammalia</taxon>
        <taxon>Eutheria</taxon>
        <taxon>Euarchontoglires</taxon>
        <taxon>Glires</taxon>
        <taxon>Rodentia</taxon>
        <taxon>Myomorpha</taxon>
        <taxon>Muroidea</taxon>
        <taxon>Muridae</taxon>
        <taxon>Murinae</taxon>
        <taxon>Mus</taxon>
        <taxon>Mus</taxon>
    </lineage>
</organism>
<proteinExistence type="evidence at protein level"/>
<protein>
    <recommendedName>
        <fullName>Protein FAM135A</fullName>
    </recommendedName>
</protein>
<comment type="alternative products">
    <event type="alternative splicing"/>
    <isoform>
        <id>Q6NS59-1</id>
        <name>1</name>
        <sequence type="displayed"/>
    </isoform>
    <isoform>
        <id>Q6NS59-2</id>
        <name>2</name>
        <sequence type="described" ref="VSP_030231"/>
    </isoform>
</comment>
<comment type="similarity">
    <text evidence="3">Belongs to the FAM135 family.</text>
</comment>
<comment type="sequence caution" evidence="3">
    <conflict type="erroneous initiation">
        <sequence resource="EMBL-CDS" id="AAH83093"/>
    </conflict>
</comment>
<name>F135A_MOUSE</name>
<gene>
    <name type="primary">Fam135a</name>
</gene>
<feature type="chain" id="PRO_0000314169" description="Protein FAM135A">
    <location>
        <begin position="1"/>
        <end position="1506"/>
    </location>
</feature>
<feature type="region of interest" description="Disordered" evidence="1">
    <location>
        <begin position="536"/>
        <end position="596"/>
    </location>
</feature>
<feature type="region of interest" description="Disordered" evidence="1">
    <location>
        <begin position="629"/>
        <end position="662"/>
    </location>
</feature>
<feature type="region of interest" description="Disordered" evidence="1">
    <location>
        <begin position="935"/>
        <end position="964"/>
    </location>
</feature>
<feature type="compositionally biased region" description="Polar residues" evidence="1">
    <location>
        <begin position="564"/>
        <end position="580"/>
    </location>
</feature>
<feature type="compositionally biased region" description="Polar residues" evidence="1">
    <location>
        <begin position="629"/>
        <end position="654"/>
    </location>
</feature>
<feature type="compositionally biased region" description="Polar residues" evidence="1">
    <location>
        <begin position="950"/>
        <end position="964"/>
    </location>
</feature>
<feature type="splice variant" id="VSP_030231" description="In isoform 2." evidence="2">
    <location>
        <begin position="1"/>
        <end position="425"/>
    </location>
</feature>
<feature type="sequence conflict" description="In Ref. 1; BAC31883." evidence="3" ref="1">
    <original>E</original>
    <variation>D</variation>
    <location>
        <position position="486"/>
    </location>
</feature>
<feature type="sequence conflict" description="In Ref. 2; AAH70446." evidence="3" ref="2">
    <original>D</original>
    <variation>Y</variation>
    <location>
        <position position="703"/>
    </location>
</feature>
<feature type="sequence conflict" description="In Ref. 1; BAB31792." evidence="3" ref="1">
    <original>K</original>
    <variation>N</variation>
    <location>
        <position position="754"/>
    </location>
</feature>
<feature type="sequence conflict" description="In Ref. 1; BAB31792." evidence="3" ref="1">
    <original>H</original>
    <variation>R</variation>
    <location>
        <position position="813"/>
    </location>
</feature>
<feature type="sequence conflict" description="In Ref. 1; BAC28616." evidence="3" ref="1">
    <original>D</original>
    <variation>E</variation>
    <location>
        <position position="994"/>
    </location>
</feature>
<feature type="sequence conflict" description="In Ref. 2; AAH83093." evidence="3" ref="2">
    <original>T</original>
    <variation>A</variation>
    <location>
        <position position="1044"/>
    </location>
</feature>
<feature type="sequence conflict" description="In Ref. 1; BAB31792." evidence="3" ref="1">
    <original>R</original>
    <variation>K</variation>
    <location>
        <position position="1162"/>
    </location>
</feature>
<reference key="1">
    <citation type="journal article" date="2005" name="Science">
        <title>The transcriptional landscape of the mammalian genome.</title>
        <authorList>
            <person name="Carninci P."/>
            <person name="Kasukawa T."/>
            <person name="Katayama S."/>
            <person name="Gough J."/>
            <person name="Frith M.C."/>
            <person name="Maeda N."/>
            <person name="Oyama R."/>
            <person name="Ravasi T."/>
            <person name="Lenhard B."/>
            <person name="Wells C."/>
            <person name="Kodzius R."/>
            <person name="Shimokawa K."/>
            <person name="Bajic V.B."/>
            <person name="Brenner S.E."/>
            <person name="Batalov S."/>
            <person name="Forrest A.R."/>
            <person name="Zavolan M."/>
            <person name="Davis M.J."/>
            <person name="Wilming L.G."/>
            <person name="Aidinis V."/>
            <person name="Allen J.E."/>
            <person name="Ambesi-Impiombato A."/>
            <person name="Apweiler R."/>
            <person name="Aturaliya R.N."/>
            <person name="Bailey T.L."/>
            <person name="Bansal M."/>
            <person name="Baxter L."/>
            <person name="Beisel K.W."/>
            <person name="Bersano T."/>
            <person name="Bono H."/>
            <person name="Chalk A.M."/>
            <person name="Chiu K.P."/>
            <person name="Choudhary V."/>
            <person name="Christoffels A."/>
            <person name="Clutterbuck D.R."/>
            <person name="Crowe M.L."/>
            <person name="Dalla E."/>
            <person name="Dalrymple B.P."/>
            <person name="de Bono B."/>
            <person name="Della Gatta G."/>
            <person name="di Bernardo D."/>
            <person name="Down T."/>
            <person name="Engstrom P."/>
            <person name="Fagiolini M."/>
            <person name="Faulkner G."/>
            <person name="Fletcher C.F."/>
            <person name="Fukushima T."/>
            <person name="Furuno M."/>
            <person name="Futaki S."/>
            <person name="Gariboldi M."/>
            <person name="Georgii-Hemming P."/>
            <person name="Gingeras T.R."/>
            <person name="Gojobori T."/>
            <person name="Green R.E."/>
            <person name="Gustincich S."/>
            <person name="Harbers M."/>
            <person name="Hayashi Y."/>
            <person name="Hensch T.K."/>
            <person name="Hirokawa N."/>
            <person name="Hill D."/>
            <person name="Huminiecki L."/>
            <person name="Iacono M."/>
            <person name="Ikeo K."/>
            <person name="Iwama A."/>
            <person name="Ishikawa T."/>
            <person name="Jakt M."/>
            <person name="Kanapin A."/>
            <person name="Katoh M."/>
            <person name="Kawasawa Y."/>
            <person name="Kelso J."/>
            <person name="Kitamura H."/>
            <person name="Kitano H."/>
            <person name="Kollias G."/>
            <person name="Krishnan S.P."/>
            <person name="Kruger A."/>
            <person name="Kummerfeld S.K."/>
            <person name="Kurochkin I.V."/>
            <person name="Lareau L.F."/>
            <person name="Lazarevic D."/>
            <person name="Lipovich L."/>
            <person name="Liu J."/>
            <person name="Liuni S."/>
            <person name="McWilliam S."/>
            <person name="Madan Babu M."/>
            <person name="Madera M."/>
            <person name="Marchionni L."/>
            <person name="Matsuda H."/>
            <person name="Matsuzawa S."/>
            <person name="Miki H."/>
            <person name="Mignone F."/>
            <person name="Miyake S."/>
            <person name="Morris K."/>
            <person name="Mottagui-Tabar S."/>
            <person name="Mulder N."/>
            <person name="Nakano N."/>
            <person name="Nakauchi H."/>
            <person name="Ng P."/>
            <person name="Nilsson R."/>
            <person name="Nishiguchi S."/>
            <person name="Nishikawa S."/>
            <person name="Nori F."/>
            <person name="Ohara O."/>
            <person name="Okazaki Y."/>
            <person name="Orlando V."/>
            <person name="Pang K.C."/>
            <person name="Pavan W.J."/>
            <person name="Pavesi G."/>
            <person name="Pesole G."/>
            <person name="Petrovsky N."/>
            <person name="Piazza S."/>
            <person name="Reed J."/>
            <person name="Reid J.F."/>
            <person name="Ring B.Z."/>
            <person name="Ringwald M."/>
            <person name="Rost B."/>
            <person name="Ruan Y."/>
            <person name="Salzberg S.L."/>
            <person name="Sandelin A."/>
            <person name="Schneider C."/>
            <person name="Schoenbach C."/>
            <person name="Sekiguchi K."/>
            <person name="Semple C.A."/>
            <person name="Seno S."/>
            <person name="Sessa L."/>
            <person name="Sheng Y."/>
            <person name="Shibata Y."/>
            <person name="Shimada H."/>
            <person name="Shimada K."/>
            <person name="Silva D."/>
            <person name="Sinclair B."/>
            <person name="Sperling S."/>
            <person name="Stupka E."/>
            <person name="Sugiura K."/>
            <person name="Sultana R."/>
            <person name="Takenaka Y."/>
            <person name="Taki K."/>
            <person name="Tammoja K."/>
            <person name="Tan S.L."/>
            <person name="Tang S."/>
            <person name="Taylor M.S."/>
            <person name="Tegner J."/>
            <person name="Teichmann S.A."/>
            <person name="Ueda H.R."/>
            <person name="van Nimwegen E."/>
            <person name="Verardo R."/>
            <person name="Wei C.L."/>
            <person name="Yagi K."/>
            <person name="Yamanishi H."/>
            <person name="Zabarovsky E."/>
            <person name="Zhu S."/>
            <person name="Zimmer A."/>
            <person name="Hide W."/>
            <person name="Bult C."/>
            <person name="Grimmond S.M."/>
            <person name="Teasdale R.D."/>
            <person name="Liu E.T."/>
            <person name="Brusic V."/>
            <person name="Quackenbush J."/>
            <person name="Wahlestedt C."/>
            <person name="Mattick J.S."/>
            <person name="Hume D.A."/>
            <person name="Kai C."/>
            <person name="Sasaki D."/>
            <person name="Tomaru Y."/>
            <person name="Fukuda S."/>
            <person name="Kanamori-Katayama M."/>
            <person name="Suzuki M."/>
            <person name="Aoki J."/>
            <person name="Arakawa T."/>
            <person name="Iida J."/>
            <person name="Imamura K."/>
            <person name="Itoh M."/>
            <person name="Kato T."/>
            <person name="Kawaji H."/>
            <person name="Kawagashira N."/>
            <person name="Kawashima T."/>
            <person name="Kojima M."/>
            <person name="Kondo S."/>
            <person name="Konno H."/>
            <person name="Nakano K."/>
            <person name="Ninomiya N."/>
            <person name="Nishio T."/>
            <person name="Okada M."/>
            <person name="Plessy C."/>
            <person name="Shibata K."/>
            <person name="Shiraki T."/>
            <person name="Suzuki S."/>
            <person name="Tagami M."/>
            <person name="Waki K."/>
            <person name="Watahiki A."/>
            <person name="Okamura-Oho Y."/>
            <person name="Suzuki H."/>
            <person name="Kawai J."/>
            <person name="Hayashizaki Y."/>
        </authorList>
    </citation>
    <scope>NUCLEOTIDE SEQUENCE [LARGE SCALE MRNA] (ISOFORM 2)</scope>
    <scope>NUCLEOTIDE SEQUENCE [LARGE SCALE MRNA] OF 1-479 (ISOFORM 1)</scope>
    <source>
        <strain>C57BL/6J</strain>
        <tissue>Diencephalon</tissue>
        <tissue>Retina</tissue>
        <tissue>Testis</tissue>
    </source>
</reference>
<reference key="2">
    <citation type="journal article" date="2004" name="Genome Res.">
        <title>The status, quality, and expansion of the NIH full-length cDNA project: the Mammalian Gene Collection (MGC).</title>
        <authorList>
            <consortium name="The MGC Project Team"/>
        </authorList>
    </citation>
    <scope>NUCLEOTIDE SEQUENCE [LARGE SCALE MRNA] (ISOFORM 1)</scope>
    <source>
        <strain>C57BL/6J</strain>
        <strain>FVB/N</strain>
        <tissue>Brain</tissue>
        <tissue>Embryo</tissue>
        <tissue>Mammary tumor</tissue>
    </source>
</reference>
<reference key="3">
    <citation type="journal article" date="2010" name="Cell">
        <title>A tissue-specific atlas of mouse protein phosphorylation and expression.</title>
        <authorList>
            <person name="Huttlin E.L."/>
            <person name="Jedrychowski M.P."/>
            <person name="Elias J.E."/>
            <person name="Goswami T."/>
            <person name="Rad R."/>
            <person name="Beausoleil S.A."/>
            <person name="Villen J."/>
            <person name="Haas W."/>
            <person name="Sowa M.E."/>
            <person name="Gygi S.P."/>
        </authorList>
    </citation>
    <scope>IDENTIFICATION BY MASS SPECTROMETRY [LARGE SCALE ANALYSIS]</scope>
    <source>
        <tissue>Testis</tissue>
    </source>
</reference>
<sequence>MTEVQAMVEFSVELNKFYNVDLFQRGFYQIRASMKIPARIPHRVEASLLHATGMTLAFPASVHDALVCSKTFQILYKNEEVVLNDVMIFKVKMLLDERKIEETLEEISFLLSLGLHFTDGDYSADDLNALQLISSRTLKLHYSICRGLHHHANVMFDYFHLSVVSVTVHASLVALHQPLISFPRPVKTTWLNRNAPAQSKDSAIPTLESVVFGINYTKQLSPDGCSFLIAESFLHHAYHFHYTLCATLLLAFKGLHSYFITVTEEIPSCQKLDLEEMDVEARLTELCEEVKKVENPDELAELINMNLAQLCSLLMALWGQFLEAITLHEDLRVLLAQEHHTLRVRRFSEAFFCFEHPREAAIAYQELHAQSHLQMCTAIKNTSFCSSLPPLPIECSELDGDLNSLPIIFEDRYLDSVIEDLDAPWMGIQSLQISEASKTDKHETEESSVVGLSSPELKVRPAVASSNCYTEGEKQLTKSLKGKNEESNKSKVKVTKLMKTMKPENTKKLIKQNSKDSVVLVSYKCLKTTASSDFTKCLEGSPSHSQKEGLDPTLCAGNFDPKTYTRQPSQKEASSLSANTDRSEHKSPDTENMQPDQFELLNSGSLNLCANLSISGKLAISQDNSDIPDTEHNLASTSSSNDCHDYQTTPSSGVRTLEVKSSSKESFNGEKITVKIGPWTELQEAELFVDNLLPDFEALDSNDKPKSIDIPLERDALQETKCHSTEESLTKFRSNLPAPSTKEYHVAVSSDTIKLPDTNATYASSRFSDSGVESEPSSFATHPNPEIAFETLQGPGPCNNERLFPQLLMKPDHNVKFSLGSHCTESTSALSEIQSSLTSINSLPSDDELSPDDNCKKSAVPDCHLSDSKTVFNLGTMDLPKCDDTKKSSIILQQQSVVFSGHLDNDTLAMHSLDLSTEDPLRLVFLDEDASSGVRSSWGSKPHLDAPFTGPQSQGTSSNNSTESVPTLNSKLICLGSPCVVSGSVCTDAGLSADRTVEGKSGEPLNHKQVCSAAPVVESDPLSSSTDVVKQGLVENYFGSQSTTDVSDACAITCHSPVSSQETCDKGISDLQQEQGKEEEEEDQEMVQNGYHEETDFSATDGTVSVHYISGNELGEGRHEQSEKLSSNYLSAGVTVPAVCTSGCLSFPSALRESPCVKYSSRSKVDAITKQPSSISYNFSSSTSWYENSPKPQIHAFLQAKEELKQLRLPGFMYSDVPLLASSAPYFSMDEEDGSEDGVHLIVCVHGLDGNSADLRLVKTYIELGLPGGRVDFLMSERNQNDTFADFDCMTDRLLDEIIQYIQIYSLTVSKISFIGHSLGNLIIRSVLTRPRFKYYLSKLHTFLSLSGPHLGTLYNSSALVNTGLWFMQKWKKSGSLLQLTCRDHSDPRQTFLYKLSNKAGLHYFKNVVLVGSLQDRYVPYHSARIEMCKTALKDKQSGQIYSEMIHNLLRPVLQSKGCNLVRYNVINALPNTADSLIGRAAHIAVLDSEIFLEKFFLVAALKYFQ</sequence>
<evidence type="ECO:0000256" key="1">
    <source>
        <dbReference type="SAM" id="MobiDB-lite"/>
    </source>
</evidence>
<evidence type="ECO:0000303" key="2">
    <source>
    </source>
</evidence>
<evidence type="ECO:0000305" key="3"/>
<keyword id="KW-0025">Alternative splicing</keyword>
<keyword id="KW-1185">Reference proteome</keyword>
<accession>Q6NS59</accession>
<accession>Q3UEW1</accession>
<accession>Q5XK31</accession>
<accession>Q8BXS8</accession>
<accession>Q8BZL9</accession>
<accession>Q8K2K2</accession>
<accession>Q9D2J6</accession>
<dbReference type="EMBL" id="AK019549">
    <property type="protein sequence ID" value="BAB31792.2"/>
    <property type="molecule type" value="mRNA"/>
</dbReference>
<dbReference type="EMBL" id="AK034175">
    <property type="protein sequence ID" value="BAC28616.1"/>
    <property type="molecule type" value="mRNA"/>
</dbReference>
<dbReference type="EMBL" id="AK044359">
    <property type="protein sequence ID" value="BAC31883.1"/>
    <property type="molecule type" value="mRNA"/>
</dbReference>
<dbReference type="EMBL" id="AK149303">
    <property type="protein sequence ID" value="BAE28800.1"/>
    <property type="molecule type" value="mRNA"/>
</dbReference>
<dbReference type="EMBL" id="BC031160">
    <property type="protein sequence ID" value="AAH31160.1"/>
    <property type="molecule type" value="mRNA"/>
</dbReference>
<dbReference type="EMBL" id="BC070446">
    <property type="protein sequence ID" value="AAH70446.1"/>
    <property type="molecule type" value="mRNA"/>
</dbReference>
<dbReference type="EMBL" id="BC083093">
    <property type="protein sequence ID" value="AAH83093.1"/>
    <property type="status" value="ALT_INIT"/>
    <property type="molecule type" value="mRNA"/>
</dbReference>
<dbReference type="CCDS" id="CCDS14853.1">
    <molecule id="Q6NS59-1"/>
</dbReference>
<dbReference type="RefSeq" id="NP_001390019.1">
    <molecule id="Q6NS59-1"/>
    <property type="nucleotide sequence ID" value="NM_001403090.1"/>
</dbReference>
<dbReference type="RefSeq" id="NP_080880.4">
    <molecule id="Q6NS59-1"/>
    <property type="nucleotide sequence ID" value="NM_026604.4"/>
</dbReference>
<dbReference type="RefSeq" id="XP_017177767.1">
    <property type="nucleotide sequence ID" value="XM_017322278.1"/>
</dbReference>
<dbReference type="RefSeq" id="XP_030098459.1">
    <molecule id="Q6NS59-2"/>
    <property type="nucleotide sequence ID" value="XM_030242599.2"/>
</dbReference>
<dbReference type="RefSeq" id="XP_030098460.1">
    <molecule id="Q6NS59-2"/>
    <property type="nucleotide sequence ID" value="XM_030242600.2"/>
</dbReference>
<dbReference type="FunCoup" id="Q6NS59">
    <property type="interactions" value="300"/>
</dbReference>
<dbReference type="STRING" id="10090.ENSMUSP00000027337"/>
<dbReference type="ESTHER" id="mouse-F135A">
    <property type="family name" value="Duf_676"/>
</dbReference>
<dbReference type="CarbonylDB" id="Q6NS59"/>
<dbReference type="GlyGen" id="Q6NS59">
    <property type="glycosylation" value="2 sites, 1 O-linked glycan (2 sites)"/>
</dbReference>
<dbReference type="iPTMnet" id="Q6NS59"/>
<dbReference type="PhosphoSitePlus" id="Q6NS59"/>
<dbReference type="SwissPalm" id="Q6NS59"/>
<dbReference type="jPOST" id="Q6NS59"/>
<dbReference type="PaxDb" id="10090-ENSMUSP00000027337"/>
<dbReference type="PeptideAtlas" id="Q6NS59"/>
<dbReference type="ProteomicsDB" id="271518">
    <molecule id="Q6NS59-1"/>
</dbReference>
<dbReference type="ProteomicsDB" id="271519">
    <molecule id="Q6NS59-2"/>
</dbReference>
<dbReference type="Pumba" id="Q6NS59"/>
<dbReference type="Antibodypedia" id="31231">
    <property type="antibodies" value="18 antibodies from 8 providers"/>
</dbReference>
<dbReference type="Ensembl" id="ENSMUST00000027337.15">
    <molecule id="Q6NS59-1"/>
    <property type="protein sequence ID" value="ENSMUSP00000027337.9"/>
    <property type="gene ID" value="ENSMUSG00000026153.16"/>
</dbReference>
<dbReference type="GeneID" id="68187"/>
<dbReference type="KEGG" id="mmu:68187"/>
<dbReference type="UCSC" id="uc007amk.2">
    <molecule id="Q6NS59-1"/>
    <property type="organism name" value="mouse"/>
</dbReference>
<dbReference type="AGR" id="MGI:1915437"/>
<dbReference type="CTD" id="57579"/>
<dbReference type="MGI" id="MGI:1915437">
    <property type="gene designation" value="Fam135a"/>
</dbReference>
<dbReference type="VEuPathDB" id="HostDB:ENSMUSG00000026153"/>
<dbReference type="eggNOG" id="KOG2205">
    <property type="taxonomic scope" value="Eukaryota"/>
</dbReference>
<dbReference type="GeneTree" id="ENSGT00940000157565"/>
<dbReference type="InParanoid" id="Q6NS59"/>
<dbReference type="OMA" id="TIHACLV"/>
<dbReference type="OrthoDB" id="273452at2759"/>
<dbReference type="PhylomeDB" id="Q6NS59"/>
<dbReference type="TreeFam" id="TF314837"/>
<dbReference type="Reactome" id="R-MMU-9696273">
    <property type="pathway name" value="RND1 GTPase cycle"/>
</dbReference>
<dbReference type="BioGRID-ORCS" id="68187">
    <property type="hits" value="2 hits in 77 CRISPR screens"/>
</dbReference>
<dbReference type="ChiTaRS" id="Fam135a">
    <property type="organism name" value="mouse"/>
</dbReference>
<dbReference type="PRO" id="PR:Q6NS59"/>
<dbReference type="Proteomes" id="UP000000589">
    <property type="component" value="Chromosome 1"/>
</dbReference>
<dbReference type="RNAct" id="Q6NS59">
    <property type="molecule type" value="protein"/>
</dbReference>
<dbReference type="Bgee" id="ENSMUSG00000026153">
    <property type="expression patterns" value="Expressed in manus and 218 other cell types or tissues"/>
</dbReference>
<dbReference type="ExpressionAtlas" id="Q6NS59">
    <property type="expression patterns" value="baseline and differential"/>
</dbReference>
<dbReference type="FunFam" id="3.40.50.1820:FF:000004">
    <property type="entry name" value="Protein FAM135A isoform a"/>
    <property type="match status" value="1"/>
</dbReference>
<dbReference type="Gene3D" id="3.40.50.1820">
    <property type="entry name" value="alpha/beta hydrolase"/>
    <property type="match status" value="1"/>
</dbReference>
<dbReference type="InterPro" id="IPR029058">
    <property type="entry name" value="AB_hydrolase_fold"/>
</dbReference>
<dbReference type="InterPro" id="IPR022122">
    <property type="entry name" value="DUF3657"/>
</dbReference>
<dbReference type="InterPro" id="IPR007751">
    <property type="entry name" value="DUF676_lipase-like"/>
</dbReference>
<dbReference type="InterPro" id="IPR044294">
    <property type="entry name" value="Lipase-like"/>
</dbReference>
<dbReference type="PANTHER" id="PTHR12482">
    <property type="entry name" value="LIPASE ROG1-RELATED-RELATED"/>
    <property type="match status" value="1"/>
</dbReference>
<dbReference type="PANTHER" id="PTHR12482:SF40">
    <property type="entry name" value="PROTEIN FAM135A"/>
    <property type="match status" value="1"/>
</dbReference>
<dbReference type="Pfam" id="PF12394">
    <property type="entry name" value="DUF3657"/>
    <property type="match status" value="1"/>
</dbReference>
<dbReference type="Pfam" id="PF05057">
    <property type="entry name" value="DUF676"/>
    <property type="match status" value="1"/>
</dbReference>
<dbReference type="SUPFAM" id="SSF53474">
    <property type="entry name" value="alpha/beta-Hydrolases"/>
    <property type="match status" value="1"/>
</dbReference>